<dbReference type="EC" id="2.7.7.6" evidence="1"/>
<dbReference type="EMBL" id="CP000252">
    <property type="protein sequence ID" value="ABC76207.1"/>
    <property type="molecule type" value="Genomic_DNA"/>
</dbReference>
<dbReference type="RefSeq" id="WP_011416241.1">
    <property type="nucleotide sequence ID" value="NC_007759.1"/>
</dbReference>
<dbReference type="SMR" id="Q2LQC9"/>
<dbReference type="FunCoup" id="Q2LQC9">
    <property type="interactions" value="466"/>
</dbReference>
<dbReference type="STRING" id="56780.SYN_01601"/>
<dbReference type="KEGG" id="sat:SYN_01601"/>
<dbReference type="eggNOG" id="COG0202">
    <property type="taxonomic scope" value="Bacteria"/>
</dbReference>
<dbReference type="HOGENOM" id="CLU_053084_0_1_7"/>
<dbReference type="InParanoid" id="Q2LQC9"/>
<dbReference type="OrthoDB" id="9805706at2"/>
<dbReference type="Proteomes" id="UP000001933">
    <property type="component" value="Chromosome"/>
</dbReference>
<dbReference type="GO" id="GO:0005737">
    <property type="term" value="C:cytoplasm"/>
    <property type="evidence" value="ECO:0007669"/>
    <property type="project" value="UniProtKB-ARBA"/>
</dbReference>
<dbReference type="GO" id="GO:0000428">
    <property type="term" value="C:DNA-directed RNA polymerase complex"/>
    <property type="evidence" value="ECO:0007669"/>
    <property type="project" value="UniProtKB-KW"/>
</dbReference>
<dbReference type="GO" id="GO:0003677">
    <property type="term" value="F:DNA binding"/>
    <property type="evidence" value="ECO:0007669"/>
    <property type="project" value="UniProtKB-UniRule"/>
</dbReference>
<dbReference type="GO" id="GO:0003899">
    <property type="term" value="F:DNA-directed RNA polymerase activity"/>
    <property type="evidence" value="ECO:0007669"/>
    <property type="project" value="UniProtKB-UniRule"/>
</dbReference>
<dbReference type="GO" id="GO:0046983">
    <property type="term" value="F:protein dimerization activity"/>
    <property type="evidence" value="ECO:0007669"/>
    <property type="project" value="InterPro"/>
</dbReference>
<dbReference type="GO" id="GO:0006351">
    <property type="term" value="P:DNA-templated transcription"/>
    <property type="evidence" value="ECO:0007669"/>
    <property type="project" value="UniProtKB-UniRule"/>
</dbReference>
<dbReference type="CDD" id="cd06928">
    <property type="entry name" value="RNAP_alpha_NTD"/>
    <property type="match status" value="1"/>
</dbReference>
<dbReference type="FunFam" id="1.10.150.20:FF:000001">
    <property type="entry name" value="DNA-directed RNA polymerase subunit alpha"/>
    <property type="match status" value="1"/>
</dbReference>
<dbReference type="FunFam" id="2.170.120.12:FF:000001">
    <property type="entry name" value="DNA-directed RNA polymerase subunit alpha"/>
    <property type="match status" value="1"/>
</dbReference>
<dbReference type="Gene3D" id="1.10.150.20">
    <property type="entry name" value="5' to 3' exonuclease, C-terminal subdomain"/>
    <property type="match status" value="1"/>
</dbReference>
<dbReference type="Gene3D" id="2.170.120.12">
    <property type="entry name" value="DNA-directed RNA polymerase, insert domain"/>
    <property type="match status" value="1"/>
</dbReference>
<dbReference type="Gene3D" id="3.30.1360.10">
    <property type="entry name" value="RNA polymerase, RBP11-like subunit"/>
    <property type="match status" value="1"/>
</dbReference>
<dbReference type="HAMAP" id="MF_00059">
    <property type="entry name" value="RNApol_bact_RpoA"/>
    <property type="match status" value="1"/>
</dbReference>
<dbReference type="InterPro" id="IPR011262">
    <property type="entry name" value="DNA-dir_RNA_pol_insert"/>
</dbReference>
<dbReference type="InterPro" id="IPR011263">
    <property type="entry name" value="DNA-dir_RNA_pol_RpoA/D/Rpb3"/>
</dbReference>
<dbReference type="InterPro" id="IPR011773">
    <property type="entry name" value="DNA-dir_RpoA"/>
</dbReference>
<dbReference type="InterPro" id="IPR036603">
    <property type="entry name" value="RBP11-like"/>
</dbReference>
<dbReference type="InterPro" id="IPR011260">
    <property type="entry name" value="RNAP_asu_C"/>
</dbReference>
<dbReference type="InterPro" id="IPR036643">
    <property type="entry name" value="RNApol_insert_sf"/>
</dbReference>
<dbReference type="NCBIfam" id="NF003513">
    <property type="entry name" value="PRK05182.1-2"/>
    <property type="match status" value="1"/>
</dbReference>
<dbReference type="NCBIfam" id="NF003519">
    <property type="entry name" value="PRK05182.2-5"/>
    <property type="match status" value="1"/>
</dbReference>
<dbReference type="NCBIfam" id="TIGR02027">
    <property type="entry name" value="rpoA"/>
    <property type="match status" value="1"/>
</dbReference>
<dbReference type="Pfam" id="PF01000">
    <property type="entry name" value="RNA_pol_A_bac"/>
    <property type="match status" value="1"/>
</dbReference>
<dbReference type="Pfam" id="PF03118">
    <property type="entry name" value="RNA_pol_A_CTD"/>
    <property type="match status" value="1"/>
</dbReference>
<dbReference type="Pfam" id="PF01193">
    <property type="entry name" value="RNA_pol_L"/>
    <property type="match status" value="1"/>
</dbReference>
<dbReference type="SMART" id="SM00662">
    <property type="entry name" value="RPOLD"/>
    <property type="match status" value="1"/>
</dbReference>
<dbReference type="SUPFAM" id="SSF47789">
    <property type="entry name" value="C-terminal domain of RNA polymerase alpha subunit"/>
    <property type="match status" value="1"/>
</dbReference>
<dbReference type="SUPFAM" id="SSF56553">
    <property type="entry name" value="Insert subdomain of RNA polymerase alpha subunit"/>
    <property type="match status" value="1"/>
</dbReference>
<dbReference type="SUPFAM" id="SSF55257">
    <property type="entry name" value="RBP11-like subunits of RNA polymerase"/>
    <property type="match status" value="1"/>
</dbReference>
<keyword id="KW-0240">DNA-directed RNA polymerase</keyword>
<keyword id="KW-0548">Nucleotidyltransferase</keyword>
<keyword id="KW-1185">Reference proteome</keyword>
<keyword id="KW-0804">Transcription</keyword>
<keyword id="KW-0808">Transferase</keyword>
<organism>
    <name type="scientific">Syntrophus aciditrophicus (strain SB)</name>
    <dbReference type="NCBI Taxonomy" id="56780"/>
    <lineage>
        <taxon>Bacteria</taxon>
        <taxon>Pseudomonadati</taxon>
        <taxon>Thermodesulfobacteriota</taxon>
        <taxon>Syntrophia</taxon>
        <taxon>Syntrophales</taxon>
        <taxon>Syntrophaceae</taxon>
        <taxon>Syntrophus</taxon>
    </lineage>
</organism>
<protein>
    <recommendedName>
        <fullName evidence="1">DNA-directed RNA polymerase subunit alpha</fullName>
        <shortName evidence="1">RNAP subunit alpha</shortName>
        <ecNumber evidence="1">2.7.7.6</ecNumber>
    </recommendedName>
    <alternativeName>
        <fullName evidence="1">RNA polymerase subunit alpha</fullName>
    </alternativeName>
    <alternativeName>
        <fullName evidence="1">Transcriptase subunit alpha</fullName>
    </alternativeName>
</protein>
<evidence type="ECO:0000255" key="1">
    <source>
        <dbReference type="HAMAP-Rule" id="MF_00059"/>
    </source>
</evidence>
<sequence>MVRNWCSLIRPRRIEIDESTHTRFYGEFVCQPLERGFGITLGNALRRVLLSSIQGAAIVSVKIDNVLHEFSTVPGVKEDITDIILNLKGVRLKLLSDGPRVIRIDTKKEGVITAADIITDGTVEVLNEDHYIASLSGDMPFRMEMVVNSGRGYVQAKKEKDVDQPEGTINIDALYSPIKKVNYTVTHARVGQIADYDKLSLEVWTDGNVLPEDAVAFAAKILKKQLQVFVGLHTVIGTEEVEEEEEGEAVSEKENLNDILLRHVEDLELSVRSANCLKNAGINLIGELVQKSEAEMLKTKNFGRKSLSEIKEILAEYGLTFGMKLEFTPWNKDVREEMGEIQEEG</sequence>
<feature type="chain" id="PRO_0000264564" description="DNA-directed RNA polymerase subunit alpha">
    <location>
        <begin position="1"/>
        <end position="345"/>
    </location>
</feature>
<feature type="region of interest" description="Alpha N-terminal domain (alpha-NTD)" evidence="1">
    <location>
        <begin position="1"/>
        <end position="233"/>
    </location>
</feature>
<feature type="region of interest" description="Alpha C-terminal domain (alpha-CTD)" evidence="1">
    <location>
        <begin position="256"/>
        <end position="345"/>
    </location>
</feature>
<accession>Q2LQC9</accession>
<gene>
    <name evidence="1" type="primary">rpoA</name>
    <name type="ordered locus">SYNAS_03280</name>
    <name type="ORF">SYN_01601</name>
</gene>
<comment type="function">
    <text evidence="1">DNA-dependent RNA polymerase catalyzes the transcription of DNA into RNA using the four ribonucleoside triphosphates as substrates.</text>
</comment>
<comment type="catalytic activity">
    <reaction evidence="1">
        <text>RNA(n) + a ribonucleoside 5'-triphosphate = RNA(n+1) + diphosphate</text>
        <dbReference type="Rhea" id="RHEA:21248"/>
        <dbReference type="Rhea" id="RHEA-COMP:14527"/>
        <dbReference type="Rhea" id="RHEA-COMP:17342"/>
        <dbReference type="ChEBI" id="CHEBI:33019"/>
        <dbReference type="ChEBI" id="CHEBI:61557"/>
        <dbReference type="ChEBI" id="CHEBI:140395"/>
        <dbReference type="EC" id="2.7.7.6"/>
    </reaction>
</comment>
<comment type="subunit">
    <text evidence="1">Homodimer. The RNAP catalytic core consists of 2 alpha, 1 beta, 1 beta' and 1 omega subunit. When a sigma factor is associated with the core the holoenzyme is formed, which can initiate transcription.</text>
</comment>
<comment type="domain">
    <text evidence="1">The N-terminal domain is essential for RNAP assembly and basal transcription, whereas the C-terminal domain is involved in interaction with transcriptional regulators and with upstream promoter elements.</text>
</comment>
<comment type="similarity">
    <text evidence="1">Belongs to the RNA polymerase alpha chain family.</text>
</comment>
<reference key="1">
    <citation type="journal article" date="2007" name="Proc. Natl. Acad. Sci. U.S.A.">
        <title>The genome of Syntrophus aciditrophicus: life at the thermodynamic limit of microbial growth.</title>
        <authorList>
            <person name="McInerney M.J."/>
            <person name="Rohlin L."/>
            <person name="Mouttaki H."/>
            <person name="Kim U."/>
            <person name="Krupp R.S."/>
            <person name="Rios-Hernandez L."/>
            <person name="Sieber J."/>
            <person name="Struchtemeyer C.G."/>
            <person name="Bhattacharyya A."/>
            <person name="Campbell J.W."/>
            <person name="Gunsalus R.P."/>
        </authorList>
    </citation>
    <scope>NUCLEOTIDE SEQUENCE [LARGE SCALE GENOMIC DNA]</scope>
    <source>
        <strain>SB</strain>
    </source>
</reference>
<proteinExistence type="inferred from homology"/>
<name>RPOA_SYNAS</name>